<feature type="chain" id="PRO_1000048187" description="Cytidylate kinase">
    <location>
        <begin position="1"/>
        <end position="215"/>
    </location>
</feature>
<feature type="binding site" evidence="1">
    <location>
        <begin position="10"/>
        <end position="18"/>
    </location>
    <ligand>
        <name>ATP</name>
        <dbReference type="ChEBI" id="CHEBI:30616"/>
    </ligand>
</feature>
<name>KCY_BARBK</name>
<sequence>MNPFVIAIDGPAASGKGTLARKIAAHYHFHHLDTGLTYRSVAHALLQQGLTCDDETSAIAHAKKLDLNILNPNLLNAHEIGEAASKIATIPAVRKILVAKQRDFIKIPPGSVLDGRDIGTVVCPDADIKFYIVANIQTRAKRRYQEILKRGRHADYQKILADLKQRDERDMTRQQSPLKSAENAHLLDTSELSIEEAFAAACTLIDPLIKARAAL</sequence>
<comment type="catalytic activity">
    <reaction evidence="1">
        <text>CMP + ATP = CDP + ADP</text>
        <dbReference type="Rhea" id="RHEA:11600"/>
        <dbReference type="ChEBI" id="CHEBI:30616"/>
        <dbReference type="ChEBI" id="CHEBI:58069"/>
        <dbReference type="ChEBI" id="CHEBI:60377"/>
        <dbReference type="ChEBI" id="CHEBI:456216"/>
        <dbReference type="EC" id="2.7.4.25"/>
    </reaction>
</comment>
<comment type="catalytic activity">
    <reaction evidence="1">
        <text>dCMP + ATP = dCDP + ADP</text>
        <dbReference type="Rhea" id="RHEA:25094"/>
        <dbReference type="ChEBI" id="CHEBI:30616"/>
        <dbReference type="ChEBI" id="CHEBI:57566"/>
        <dbReference type="ChEBI" id="CHEBI:58593"/>
        <dbReference type="ChEBI" id="CHEBI:456216"/>
        <dbReference type="EC" id="2.7.4.25"/>
    </reaction>
</comment>
<comment type="subcellular location">
    <subcellularLocation>
        <location evidence="1">Cytoplasm</location>
    </subcellularLocation>
</comment>
<comment type="similarity">
    <text evidence="1">Belongs to the cytidylate kinase family. Type 1 subfamily.</text>
</comment>
<organism>
    <name type="scientific">Bartonella bacilliformis (strain ATCC 35685 / KC583 / Herrer 020/F12,63)</name>
    <dbReference type="NCBI Taxonomy" id="360095"/>
    <lineage>
        <taxon>Bacteria</taxon>
        <taxon>Pseudomonadati</taxon>
        <taxon>Pseudomonadota</taxon>
        <taxon>Alphaproteobacteria</taxon>
        <taxon>Hyphomicrobiales</taxon>
        <taxon>Bartonellaceae</taxon>
        <taxon>Bartonella</taxon>
    </lineage>
</organism>
<accession>A1UU99</accession>
<reference key="1">
    <citation type="submission" date="2006-12" db="EMBL/GenBank/DDBJ databases">
        <authorList>
            <person name="Hendrix L."/>
            <person name="Mohamoud Y."/>
            <person name="Radune D."/>
            <person name="Shvartsbeyn A."/>
            <person name="Daugherty S."/>
            <person name="Dodson R."/>
            <person name="Durkin A.S."/>
            <person name="Harkins D."/>
            <person name="Huot H."/>
            <person name="Kothari S.P."/>
            <person name="Madupu R."/>
            <person name="Li J."/>
            <person name="Nelson W.C."/>
            <person name="Shrivastava S."/>
            <person name="Giglio M.G."/>
            <person name="Haft D."/>
            <person name="Selengut J."/>
            <person name="Fraser-Ligget C."/>
            <person name="Seshadri R."/>
        </authorList>
    </citation>
    <scope>NUCLEOTIDE SEQUENCE [LARGE SCALE GENOMIC DNA]</scope>
    <source>
        <strain>ATCC 35685 / KC583 / Herrer 020/F12,63</strain>
    </source>
</reference>
<proteinExistence type="inferred from homology"/>
<protein>
    <recommendedName>
        <fullName evidence="1">Cytidylate kinase</fullName>
        <shortName evidence="1">CK</shortName>
        <ecNumber evidence="1">2.7.4.25</ecNumber>
    </recommendedName>
    <alternativeName>
        <fullName evidence="1">Cytidine monophosphate kinase</fullName>
        <shortName evidence="1">CMP kinase</shortName>
    </alternativeName>
</protein>
<keyword id="KW-0067">ATP-binding</keyword>
<keyword id="KW-0963">Cytoplasm</keyword>
<keyword id="KW-0418">Kinase</keyword>
<keyword id="KW-0547">Nucleotide-binding</keyword>
<keyword id="KW-0808">Transferase</keyword>
<evidence type="ECO:0000255" key="1">
    <source>
        <dbReference type="HAMAP-Rule" id="MF_00238"/>
    </source>
</evidence>
<gene>
    <name evidence="1" type="primary">cmk</name>
    <name type="ordered locus">BARBAKC583_1304</name>
</gene>
<dbReference type="EC" id="2.7.4.25" evidence="1"/>
<dbReference type="EMBL" id="CP000524">
    <property type="protein sequence ID" value="ABM45646.1"/>
    <property type="molecule type" value="Genomic_DNA"/>
</dbReference>
<dbReference type="RefSeq" id="WP_005768080.1">
    <property type="nucleotide sequence ID" value="NC_008783.1"/>
</dbReference>
<dbReference type="SMR" id="A1UU99"/>
<dbReference type="STRING" id="360095.BARBAKC583_1304"/>
<dbReference type="GeneID" id="4684809"/>
<dbReference type="KEGG" id="bbk:BARBAKC583_1304"/>
<dbReference type="PATRIC" id="fig|360095.6.peg.1276"/>
<dbReference type="eggNOG" id="COG0283">
    <property type="taxonomic scope" value="Bacteria"/>
</dbReference>
<dbReference type="HOGENOM" id="CLU_079959_0_1_5"/>
<dbReference type="OrthoDB" id="9807434at2"/>
<dbReference type="Proteomes" id="UP000000643">
    <property type="component" value="Chromosome"/>
</dbReference>
<dbReference type="GO" id="GO:0005737">
    <property type="term" value="C:cytoplasm"/>
    <property type="evidence" value="ECO:0007669"/>
    <property type="project" value="UniProtKB-SubCell"/>
</dbReference>
<dbReference type="GO" id="GO:0005524">
    <property type="term" value="F:ATP binding"/>
    <property type="evidence" value="ECO:0007669"/>
    <property type="project" value="UniProtKB-UniRule"/>
</dbReference>
<dbReference type="GO" id="GO:0036430">
    <property type="term" value="F:CMP kinase activity"/>
    <property type="evidence" value="ECO:0007669"/>
    <property type="project" value="RHEA"/>
</dbReference>
<dbReference type="GO" id="GO:0036431">
    <property type="term" value="F:dCMP kinase activity"/>
    <property type="evidence" value="ECO:0007669"/>
    <property type="project" value="RHEA"/>
</dbReference>
<dbReference type="GO" id="GO:0006220">
    <property type="term" value="P:pyrimidine nucleotide metabolic process"/>
    <property type="evidence" value="ECO:0007669"/>
    <property type="project" value="UniProtKB-UniRule"/>
</dbReference>
<dbReference type="CDD" id="cd02020">
    <property type="entry name" value="CMPK"/>
    <property type="match status" value="1"/>
</dbReference>
<dbReference type="Gene3D" id="3.40.50.300">
    <property type="entry name" value="P-loop containing nucleotide triphosphate hydrolases"/>
    <property type="match status" value="1"/>
</dbReference>
<dbReference type="HAMAP" id="MF_00238">
    <property type="entry name" value="Cytidyl_kinase_type1"/>
    <property type="match status" value="1"/>
</dbReference>
<dbReference type="InterPro" id="IPR003136">
    <property type="entry name" value="Cytidylate_kin"/>
</dbReference>
<dbReference type="InterPro" id="IPR011994">
    <property type="entry name" value="Cytidylate_kinase_dom"/>
</dbReference>
<dbReference type="InterPro" id="IPR027417">
    <property type="entry name" value="P-loop_NTPase"/>
</dbReference>
<dbReference type="NCBIfam" id="TIGR00017">
    <property type="entry name" value="cmk"/>
    <property type="match status" value="1"/>
</dbReference>
<dbReference type="Pfam" id="PF02224">
    <property type="entry name" value="Cytidylate_kin"/>
    <property type="match status" value="1"/>
</dbReference>
<dbReference type="SUPFAM" id="SSF52540">
    <property type="entry name" value="P-loop containing nucleoside triphosphate hydrolases"/>
    <property type="match status" value="1"/>
</dbReference>